<keyword id="KW-0648">Protein biosynthesis</keyword>
<keyword id="KW-0808">Transferase</keyword>
<gene>
    <name evidence="1" type="primary">fmt</name>
    <name type="ordered locus">ABBFA_000025</name>
</gene>
<evidence type="ECO:0000255" key="1">
    <source>
        <dbReference type="HAMAP-Rule" id="MF_00182"/>
    </source>
</evidence>
<reference key="1">
    <citation type="journal article" date="2008" name="J. Bacteriol.">
        <title>Comparative genome sequence analysis of multidrug-resistant Acinetobacter baumannii.</title>
        <authorList>
            <person name="Adams M.D."/>
            <person name="Goglin K."/>
            <person name="Molyneaux N."/>
            <person name="Hujer K.M."/>
            <person name="Lavender H."/>
            <person name="Jamison J.J."/>
            <person name="MacDonald I.J."/>
            <person name="Martin K.M."/>
            <person name="Russo T."/>
            <person name="Campagnari A.A."/>
            <person name="Hujer A.M."/>
            <person name="Bonomo R.A."/>
            <person name="Gill S.R."/>
        </authorList>
    </citation>
    <scope>NUCLEOTIDE SEQUENCE [LARGE SCALE GENOMIC DNA]</scope>
    <source>
        <strain>AB307-0294</strain>
    </source>
</reference>
<protein>
    <recommendedName>
        <fullName evidence="1">Methionyl-tRNA formyltransferase</fullName>
        <ecNumber evidence="1">2.1.2.9</ecNumber>
    </recommendedName>
</protein>
<proteinExistence type="inferred from homology"/>
<comment type="function">
    <text evidence="1">Attaches a formyl group to the free amino group of methionyl-tRNA(fMet). The formyl group appears to play a dual role in the initiator identity of N-formylmethionyl-tRNA by promoting its recognition by IF2 and preventing the misappropriation of this tRNA by the elongation apparatus.</text>
</comment>
<comment type="catalytic activity">
    <reaction evidence="1">
        <text>L-methionyl-tRNA(fMet) + (6R)-10-formyltetrahydrofolate = N-formyl-L-methionyl-tRNA(fMet) + (6S)-5,6,7,8-tetrahydrofolate + H(+)</text>
        <dbReference type="Rhea" id="RHEA:24380"/>
        <dbReference type="Rhea" id="RHEA-COMP:9952"/>
        <dbReference type="Rhea" id="RHEA-COMP:9953"/>
        <dbReference type="ChEBI" id="CHEBI:15378"/>
        <dbReference type="ChEBI" id="CHEBI:57453"/>
        <dbReference type="ChEBI" id="CHEBI:78530"/>
        <dbReference type="ChEBI" id="CHEBI:78844"/>
        <dbReference type="ChEBI" id="CHEBI:195366"/>
        <dbReference type="EC" id="2.1.2.9"/>
    </reaction>
</comment>
<comment type="similarity">
    <text evidence="1">Belongs to the Fmt family.</text>
</comment>
<name>FMT_ACIB3</name>
<accession>B7GUZ7</accession>
<organism>
    <name type="scientific">Acinetobacter baumannii (strain AB307-0294)</name>
    <dbReference type="NCBI Taxonomy" id="557600"/>
    <lineage>
        <taxon>Bacteria</taxon>
        <taxon>Pseudomonadati</taxon>
        <taxon>Pseudomonadota</taxon>
        <taxon>Gammaproteobacteria</taxon>
        <taxon>Moraxellales</taxon>
        <taxon>Moraxellaceae</taxon>
        <taxon>Acinetobacter</taxon>
        <taxon>Acinetobacter calcoaceticus/baumannii complex</taxon>
    </lineage>
</organism>
<sequence>MKIIFAGTPEFAATALAALLKTSHEIIAVYTQPDRKAGRGQKLTPSPVKQLALEHNIPVYQPLHFKASTEEGLAAQQELAALGADVMVVAAYGLILPQAVLDTPKYGCLNIHGSLLPRWRGAAPIQRAIATGDDETGITIMQMAAGLDTGDMMYKTYCPITSEDTSATLHDKLAAQGATAICAVLESEETLQKYLAEREVQDESLTVYAHKLVKSEARIDWSMNAVQVDRNIRAFNPWPVAFIQLDENNALRVWNSTISSQSKVNAQAGEIIAIDKQGVHVACGENTFICLTSVQWPGGKALNAQQIAQTQKLHVGQILP</sequence>
<feature type="chain" id="PRO_1000118466" description="Methionyl-tRNA formyltransferase">
    <location>
        <begin position="1"/>
        <end position="320"/>
    </location>
</feature>
<feature type="binding site" evidence="1">
    <location>
        <begin position="114"/>
        <end position="117"/>
    </location>
    <ligand>
        <name>(6S)-5,6,7,8-tetrahydrofolate</name>
        <dbReference type="ChEBI" id="CHEBI:57453"/>
    </ligand>
</feature>
<dbReference type="EC" id="2.1.2.9" evidence="1"/>
<dbReference type="EMBL" id="CP001172">
    <property type="protein sequence ID" value="ACJ58341.1"/>
    <property type="molecule type" value="Genomic_DNA"/>
</dbReference>
<dbReference type="RefSeq" id="WP_000691200.1">
    <property type="nucleotide sequence ID" value="NZ_CP001172.1"/>
</dbReference>
<dbReference type="SMR" id="B7GUZ7"/>
<dbReference type="HOGENOM" id="CLU_033347_1_2_6"/>
<dbReference type="Proteomes" id="UP000006924">
    <property type="component" value="Chromosome"/>
</dbReference>
<dbReference type="GO" id="GO:0005829">
    <property type="term" value="C:cytosol"/>
    <property type="evidence" value="ECO:0007669"/>
    <property type="project" value="TreeGrafter"/>
</dbReference>
<dbReference type="GO" id="GO:0004479">
    <property type="term" value="F:methionyl-tRNA formyltransferase activity"/>
    <property type="evidence" value="ECO:0007669"/>
    <property type="project" value="UniProtKB-UniRule"/>
</dbReference>
<dbReference type="CDD" id="cd08646">
    <property type="entry name" value="FMT_core_Met-tRNA-FMT_N"/>
    <property type="match status" value="1"/>
</dbReference>
<dbReference type="CDD" id="cd08704">
    <property type="entry name" value="Met_tRNA_FMT_C"/>
    <property type="match status" value="1"/>
</dbReference>
<dbReference type="Gene3D" id="3.10.25.10">
    <property type="entry name" value="Formyl transferase, C-terminal domain"/>
    <property type="match status" value="1"/>
</dbReference>
<dbReference type="Gene3D" id="3.40.50.170">
    <property type="entry name" value="Formyl transferase, N-terminal domain"/>
    <property type="match status" value="1"/>
</dbReference>
<dbReference type="HAMAP" id="MF_00182">
    <property type="entry name" value="Formyl_trans"/>
    <property type="match status" value="1"/>
</dbReference>
<dbReference type="InterPro" id="IPR005794">
    <property type="entry name" value="Fmt"/>
</dbReference>
<dbReference type="InterPro" id="IPR005793">
    <property type="entry name" value="Formyl_trans_C"/>
</dbReference>
<dbReference type="InterPro" id="IPR037022">
    <property type="entry name" value="Formyl_trans_C_sf"/>
</dbReference>
<dbReference type="InterPro" id="IPR002376">
    <property type="entry name" value="Formyl_transf_N"/>
</dbReference>
<dbReference type="InterPro" id="IPR036477">
    <property type="entry name" value="Formyl_transf_N_sf"/>
</dbReference>
<dbReference type="InterPro" id="IPR011034">
    <property type="entry name" value="Formyl_transferase-like_C_sf"/>
</dbReference>
<dbReference type="InterPro" id="IPR044135">
    <property type="entry name" value="Met-tRNA-FMT_C"/>
</dbReference>
<dbReference type="InterPro" id="IPR041711">
    <property type="entry name" value="Met-tRNA-FMT_N"/>
</dbReference>
<dbReference type="NCBIfam" id="TIGR00460">
    <property type="entry name" value="fmt"/>
    <property type="match status" value="1"/>
</dbReference>
<dbReference type="PANTHER" id="PTHR11138">
    <property type="entry name" value="METHIONYL-TRNA FORMYLTRANSFERASE"/>
    <property type="match status" value="1"/>
</dbReference>
<dbReference type="PANTHER" id="PTHR11138:SF5">
    <property type="entry name" value="METHIONYL-TRNA FORMYLTRANSFERASE, MITOCHONDRIAL"/>
    <property type="match status" value="1"/>
</dbReference>
<dbReference type="Pfam" id="PF02911">
    <property type="entry name" value="Formyl_trans_C"/>
    <property type="match status" value="1"/>
</dbReference>
<dbReference type="Pfam" id="PF00551">
    <property type="entry name" value="Formyl_trans_N"/>
    <property type="match status" value="1"/>
</dbReference>
<dbReference type="SUPFAM" id="SSF50486">
    <property type="entry name" value="FMT C-terminal domain-like"/>
    <property type="match status" value="1"/>
</dbReference>
<dbReference type="SUPFAM" id="SSF53328">
    <property type="entry name" value="Formyltransferase"/>
    <property type="match status" value="1"/>
</dbReference>